<dbReference type="EMBL" id="L42289">
    <property type="protein sequence ID" value="AAA67115.1"/>
    <property type="molecule type" value="Genomic_DNA"/>
</dbReference>
<dbReference type="SMR" id="P52325"/>
<dbReference type="GO" id="GO:0005737">
    <property type="term" value="C:cytoplasm"/>
    <property type="evidence" value="ECO:0007669"/>
    <property type="project" value="UniProtKB-SubCell"/>
</dbReference>
<dbReference type="GO" id="GO:0003677">
    <property type="term" value="F:DNA binding"/>
    <property type="evidence" value="ECO:0007669"/>
    <property type="project" value="UniProtKB-UniRule"/>
</dbReference>
<dbReference type="GO" id="GO:0016987">
    <property type="term" value="F:sigma factor activity"/>
    <property type="evidence" value="ECO:0007669"/>
    <property type="project" value="UniProtKB-UniRule"/>
</dbReference>
<dbReference type="GO" id="GO:0006352">
    <property type="term" value="P:DNA-templated transcription initiation"/>
    <property type="evidence" value="ECO:0007669"/>
    <property type="project" value="UniProtKB-UniRule"/>
</dbReference>
<dbReference type="CDD" id="cd06171">
    <property type="entry name" value="Sigma70_r4"/>
    <property type="match status" value="1"/>
</dbReference>
<dbReference type="FunFam" id="1.10.10.10:FF:000002">
    <property type="entry name" value="RNA polymerase sigma factor SigA"/>
    <property type="match status" value="1"/>
</dbReference>
<dbReference type="FunFam" id="1.10.10.10:FF:000004">
    <property type="entry name" value="RNA polymerase sigma factor SigA"/>
    <property type="match status" value="1"/>
</dbReference>
<dbReference type="FunFam" id="1.10.601.10:FF:000001">
    <property type="entry name" value="RNA polymerase sigma factor SigA"/>
    <property type="match status" value="1"/>
</dbReference>
<dbReference type="Gene3D" id="1.10.601.10">
    <property type="entry name" value="RNA Polymerase Primary Sigma Factor"/>
    <property type="match status" value="1"/>
</dbReference>
<dbReference type="Gene3D" id="1.10.220.120">
    <property type="entry name" value="Sigma-70 factor, region 1.1"/>
    <property type="match status" value="1"/>
</dbReference>
<dbReference type="Gene3D" id="1.10.10.10">
    <property type="entry name" value="Winged helix-like DNA-binding domain superfamily/Winged helix DNA-binding domain"/>
    <property type="match status" value="2"/>
</dbReference>
<dbReference type="HAMAP" id="MF_00963">
    <property type="entry name" value="Sigma70_RpoD_SigA"/>
    <property type="match status" value="1"/>
</dbReference>
<dbReference type="InterPro" id="IPR014284">
    <property type="entry name" value="RNA_pol_sigma-70_dom"/>
</dbReference>
<dbReference type="InterPro" id="IPR000943">
    <property type="entry name" value="RNA_pol_sigma70"/>
</dbReference>
<dbReference type="InterPro" id="IPR009042">
    <property type="entry name" value="RNA_pol_sigma70_r1_2"/>
</dbReference>
<dbReference type="InterPro" id="IPR007627">
    <property type="entry name" value="RNA_pol_sigma70_r2"/>
</dbReference>
<dbReference type="InterPro" id="IPR007624">
    <property type="entry name" value="RNA_pol_sigma70_r3"/>
</dbReference>
<dbReference type="InterPro" id="IPR007630">
    <property type="entry name" value="RNA_pol_sigma70_r4"/>
</dbReference>
<dbReference type="InterPro" id="IPR007631">
    <property type="entry name" value="RNA_pol_sigma_70_non-ess"/>
</dbReference>
<dbReference type="InterPro" id="IPR007127">
    <property type="entry name" value="RNA_pol_sigma_70_r1_1"/>
</dbReference>
<dbReference type="InterPro" id="IPR042189">
    <property type="entry name" value="RNA_pol_sigma_70_r1_1_sf"/>
</dbReference>
<dbReference type="InterPro" id="IPR013325">
    <property type="entry name" value="RNA_pol_sigma_r2"/>
</dbReference>
<dbReference type="InterPro" id="IPR013324">
    <property type="entry name" value="RNA_pol_sigma_r3/r4-like"/>
</dbReference>
<dbReference type="InterPro" id="IPR012760">
    <property type="entry name" value="RNA_pol_sigma_RpoD_C"/>
</dbReference>
<dbReference type="InterPro" id="IPR050239">
    <property type="entry name" value="Sigma-70_RNA_pol_init_factors"/>
</dbReference>
<dbReference type="InterPro" id="IPR028630">
    <property type="entry name" value="Sigma70_RpoD"/>
</dbReference>
<dbReference type="InterPro" id="IPR036388">
    <property type="entry name" value="WH-like_DNA-bd_sf"/>
</dbReference>
<dbReference type="NCBIfam" id="NF004208">
    <property type="entry name" value="PRK05658.1"/>
    <property type="match status" value="1"/>
</dbReference>
<dbReference type="NCBIfam" id="TIGR02393">
    <property type="entry name" value="RpoD_Cterm"/>
    <property type="match status" value="1"/>
</dbReference>
<dbReference type="NCBIfam" id="TIGR02937">
    <property type="entry name" value="sigma70-ECF"/>
    <property type="match status" value="1"/>
</dbReference>
<dbReference type="PANTHER" id="PTHR30603">
    <property type="entry name" value="RNA POLYMERASE SIGMA FACTOR RPO"/>
    <property type="match status" value="1"/>
</dbReference>
<dbReference type="PANTHER" id="PTHR30603:SF60">
    <property type="entry name" value="RNA POLYMERASE SIGMA FACTOR RPOD"/>
    <property type="match status" value="1"/>
</dbReference>
<dbReference type="Pfam" id="PF04546">
    <property type="entry name" value="Sigma70_ner"/>
    <property type="match status" value="1"/>
</dbReference>
<dbReference type="Pfam" id="PF03979">
    <property type="entry name" value="Sigma70_r1_1"/>
    <property type="match status" value="1"/>
</dbReference>
<dbReference type="Pfam" id="PF00140">
    <property type="entry name" value="Sigma70_r1_2"/>
    <property type="match status" value="1"/>
</dbReference>
<dbReference type="Pfam" id="PF04542">
    <property type="entry name" value="Sigma70_r2"/>
    <property type="match status" value="1"/>
</dbReference>
<dbReference type="Pfam" id="PF04539">
    <property type="entry name" value="Sigma70_r3"/>
    <property type="match status" value="1"/>
</dbReference>
<dbReference type="Pfam" id="PF04545">
    <property type="entry name" value="Sigma70_r4"/>
    <property type="match status" value="1"/>
</dbReference>
<dbReference type="PRINTS" id="PR00046">
    <property type="entry name" value="SIGMA70FCT"/>
</dbReference>
<dbReference type="SUPFAM" id="SSF88946">
    <property type="entry name" value="Sigma2 domain of RNA polymerase sigma factors"/>
    <property type="match status" value="1"/>
</dbReference>
<dbReference type="SUPFAM" id="SSF88659">
    <property type="entry name" value="Sigma3 and sigma4 domains of RNA polymerase sigma factors"/>
    <property type="match status" value="2"/>
</dbReference>
<dbReference type="PROSITE" id="PS00715">
    <property type="entry name" value="SIGMA70_1"/>
    <property type="match status" value="1"/>
</dbReference>
<dbReference type="PROSITE" id="PS00716">
    <property type="entry name" value="SIGMA70_2"/>
    <property type="match status" value="1"/>
</dbReference>
<gene>
    <name evidence="1" type="primary">rpoD</name>
</gene>
<feature type="chain" id="PRO_0000093904" description="RNA polymerase sigma factor RpoD">
    <location>
        <begin position="1"/>
        <end position="642"/>
    </location>
</feature>
<feature type="DNA-binding region" description="H-T-H motif" evidence="1">
    <location>
        <begin position="597"/>
        <end position="616"/>
    </location>
</feature>
<feature type="region of interest" description="Disordered" evidence="2">
    <location>
        <begin position="199"/>
        <end position="228"/>
    </location>
</feature>
<feature type="region of interest" description="Sigma-70 factor domain-2" evidence="1">
    <location>
        <begin position="403"/>
        <end position="473"/>
    </location>
</feature>
<feature type="region of interest" description="Sigma-70 factor domain-3" evidence="1">
    <location>
        <begin position="482"/>
        <end position="558"/>
    </location>
</feature>
<feature type="region of interest" description="Sigma-70 factor domain-4" evidence="1">
    <location>
        <begin position="571"/>
        <end position="624"/>
    </location>
</feature>
<feature type="short sequence motif" description="Interaction with polymerase core subunit RpoC">
    <location>
        <begin position="427"/>
        <end position="430"/>
    </location>
</feature>
<feature type="compositionally biased region" description="Acidic residues" evidence="2">
    <location>
        <begin position="212"/>
        <end position="228"/>
    </location>
</feature>
<protein>
    <recommendedName>
        <fullName evidence="1">RNA polymerase sigma factor RpoD</fullName>
    </recommendedName>
    <alternativeName>
        <fullName evidence="1">Sigma-70</fullName>
    </alternativeName>
</protein>
<keyword id="KW-0963">Cytoplasm</keyword>
<keyword id="KW-0238">DNA-binding</keyword>
<keyword id="KW-0731">Sigma factor</keyword>
<keyword id="KW-0804">Transcription</keyword>
<keyword id="KW-0805">Transcription regulation</keyword>
<organism>
    <name type="scientific">Neisseria gonorrhoeae</name>
    <dbReference type="NCBI Taxonomy" id="485"/>
    <lineage>
        <taxon>Bacteria</taxon>
        <taxon>Pseudomonadati</taxon>
        <taxon>Pseudomonadota</taxon>
        <taxon>Betaproteobacteria</taxon>
        <taxon>Neisseriales</taxon>
        <taxon>Neisseriaceae</taxon>
        <taxon>Neisseria</taxon>
    </lineage>
</organism>
<reference key="1">
    <citation type="submission" date="1995-05" db="EMBL/GenBank/DDBJ databases">
        <authorList>
            <person name="Subbarao S."/>
            <person name="Morse S.A."/>
        </authorList>
    </citation>
    <scope>NUCLEOTIDE SEQUENCE [GENOMIC DNA]</scope>
    <source>
        <strain>ATCC 33084 / F62 / M-1914</strain>
    </source>
</reference>
<sequence length="642" mass="73679">MSKNQNHEEYQDDARPLTIEEQRARLRQLIIMGKERGYITYSEINDALPDDMSDADQIDNIVSMISGLGIQVTEHAPDAEDILLSDNAAVTDDDAVEEAEAALSSADSEFGRTTDPVRMYMREMGQVDLLTREDEIIIAKKIENALKNMVQAISACPGSIAEILELIEKICKDEIRVDEVVEAIIDPNEVLRNELGLGHLETTAPEKPSNDNSDENEDDEESEEDADEISAANLAELKQKVIGHFAQIEKDYKKMIGCLEKHHSRHKDYLAYRDAIANKLLEVRFATRQIDSLSSSLRGKVENIRKLEREIRDICLDRVHMERDYFIQNFLPEITNLQWIEEEIAKGRVWSNALDRFRHAILEKQTELADMEKETRISIEELKEINKNMVSSEKVSAAAKQEMIQANLRLVISIAKKYTNRGLQFLDLIQEGNIGLMKAVDKFEYRRGYKFSTYATWWIRQAITRSIADQARTIRIPVHMIETINKMNRISRQHLQETGEEPDSAKLAELMQMPEDKIRKIMKIAKEPISMETPIGDDDDSHLGDFIEDANNVAPADAAMYTSLHEVTKEILESLTPREAKVLRMRFGIDMNTDHTLEEVGRQFDVTRERIRQIEAKALRKLRHPTRSDRLRSFLDSEDSKL</sequence>
<accession>P52325</accession>
<evidence type="ECO:0000255" key="1">
    <source>
        <dbReference type="HAMAP-Rule" id="MF_00963"/>
    </source>
</evidence>
<evidence type="ECO:0000256" key="2">
    <source>
        <dbReference type="SAM" id="MobiDB-lite"/>
    </source>
</evidence>
<comment type="function">
    <text evidence="1">Sigma factors are initiation factors that promote the attachment of RNA polymerase to specific initiation sites and are then released. This sigma factor is the primary sigma factor during exponential growth.</text>
</comment>
<comment type="subunit">
    <text evidence="1">Interacts transiently with the RNA polymerase catalytic core.</text>
</comment>
<comment type="subcellular location">
    <subcellularLocation>
        <location evidence="1">Cytoplasm</location>
    </subcellularLocation>
</comment>
<comment type="similarity">
    <text evidence="1">Belongs to the sigma-70 factor family. RpoD/SigA subfamily.</text>
</comment>
<name>RPOD_NEIGO</name>
<proteinExistence type="inferred from homology"/>